<keyword id="KW-0963">Cytoplasm</keyword>
<keyword id="KW-0217">Developmental protein</keyword>
<keyword id="KW-0221">Differentiation</keyword>
<keyword id="KW-0479">Metal-binding</keyword>
<keyword id="KW-0896">Oogenesis</keyword>
<keyword id="KW-1267">Proteomics identification</keyword>
<keyword id="KW-1185">Reference proteome</keyword>
<keyword id="KW-0694">RNA-binding</keyword>
<keyword id="KW-0862">Zinc</keyword>
<keyword id="KW-0863">Zinc-finger</keyword>
<feature type="chain" id="PRO_0000332227" description="Protein ZAR1-like">
    <location>
        <begin position="1"/>
        <end position="321"/>
    </location>
</feature>
<feature type="zinc finger region" description="3CxxC-type" evidence="3">
    <location>
        <begin position="222"/>
        <end position="307"/>
    </location>
</feature>
<feature type="region of interest" description="Disordered" evidence="4">
    <location>
        <begin position="110"/>
        <end position="214"/>
    </location>
</feature>
<feature type="compositionally biased region" description="Basic and acidic residues" evidence="4">
    <location>
        <begin position="145"/>
        <end position="154"/>
    </location>
</feature>
<name>ZAR1L_HUMAN</name>
<reference key="1">
    <citation type="journal article" date="2004" name="Nature">
        <title>The DNA sequence and analysis of human chromosome 13.</title>
        <authorList>
            <person name="Dunham A."/>
            <person name="Matthews L.H."/>
            <person name="Burton J."/>
            <person name="Ashurst J.L."/>
            <person name="Howe K.L."/>
            <person name="Ashcroft K.J."/>
            <person name="Beare D.M."/>
            <person name="Burford D.C."/>
            <person name="Hunt S.E."/>
            <person name="Griffiths-Jones S."/>
            <person name="Jones M.C."/>
            <person name="Keenan S.J."/>
            <person name="Oliver K."/>
            <person name="Scott C.E."/>
            <person name="Ainscough R."/>
            <person name="Almeida J.P."/>
            <person name="Ambrose K.D."/>
            <person name="Andrews D.T."/>
            <person name="Ashwell R.I.S."/>
            <person name="Babbage A.K."/>
            <person name="Bagguley C.L."/>
            <person name="Bailey J."/>
            <person name="Bannerjee R."/>
            <person name="Barlow K.F."/>
            <person name="Bates K."/>
            <person name="Beasley H."/>
            <person name="Bird C.P."/>
            <person name="Bray-Allen S."/>
            <person name="Brown A.J."/>
            <person name="Brown J.Y."/>
            <person name="Burrill W."/>
            <person name="Carder C."/>
            <person name="Carter N.P."/>
            <person name="Chapman J.C."/>
            <person name="Clamp M.E."/>
            <person name="Clark S.Y."/>
            <person name="Clarke G."/>
            <person name="Clee C.M."/>
            <person name="Clegg S.C."/>
            <person name="Cobley V."/>
            <person name="Collins J.E."/>
            <person name="Corby N."/>
            <person name="Coville G.J."/>
            <person name="Deloukas P."/>
            <person name="Dhami P."/>
            <person name="Dunham I."/>
            <person name="Dunn M."/>
            <person name="Earthrowl M.E."/>
            <person name="Ellington A.G."/>
            <person name="Faulkner L."/>
            <person name="Frankish A.G."/>
            <person name="Frankland J."/>
            <person name="French L."/>
            <person name="Garner P."/>
            <person name="Garnett J."/>
            <person name="Gilbert J.G.R."/>
            <person name="Gilson C.J."/>
            <person name="Ghori J."/>
            <person name="Grafham D.V."/>
            <person name="Gribble S.M."/>
            <person name="Griffiths C."/>
            <person name="Hall R.E."/>
            <person name="Hammond S."/>
            <person name="Harley J.L."/>
            <person name="Hart E.A."/>
            <person name="Heath P.D."/>
            <person name="Howden P.J."/>
            <person name="Huckle E.J."/>
            <person name="Hunt P.J."/>
            <person name="Hunt A.R."/>
            <person name="Johnson C."/>
            <person name="Johnson D."/>
            <person name="Kay M."/>
            <person name="Kimberley A.M."/>
            <person name="King A."/>
            <person name="Laird G.K."/>
            <person name="Langford C.J."/>
            <person name="Lawlor S."/>
            <person name="Leongamornlert D.A."/>
            <person name="Lloyd D.M."/>
            <person name="Lloyd C."/>
            <person name="Loveland J.E."/>
            <person name="Lovell J."/>
            <person name="Martin S."/>
            <person name="Mashreghi-Mohammadi M."/>
            <person name="McLaren S.J."/>
            <person name="McMurray A."/>
            <person name="Milne S."/>
            <person name="Moore M.J.F."/>
            <person name="Nickerson T."/>
            <person name="Palmer S.A."/>
            <person name="Pearce A.V."/>
            <person name="Peck A.I."/>
            <person name="Pelan S."/>
            <person name="Phillimore B."/>
            <person name="Porter K.M."/>
            <person name="Rice C.M."/>
            <person name="Searle S."/>
            <person name="Sehra H.K."/>
            <person name="Shownkeen R."/>
            <person name="Skuce C.D."/>
            <person name="Smith M."/>
            <person name="Steward C.A."/>
            <person name="Sycamore N."/>
            <person name="Tester J."/>
            <person name="Thomas D.W."/>
            <person name="Tracey A."/>
            <person name="Tromans A."/>
            <person name="Tubby B."/>
            <person name="Wall M."/>
            <person name="Wallis J.M."/>
            <person name="West A.P."/>
            <person name="Whitehead S.L."/>
            <person name="Willey D.L."/>
            <person name="Wilming L."/>
            <person name="Wray P.W."/>
            <person name="Wright M.W."/>
            <person name="Young L."/>
            <person name="Coulson A."/>
            <person name="Durbin R.M."/>
            <person name="Hubbard T."/>
            <person name="Sulston J.E."/>
            <person name="Beck S."/>
            <person name="Bentley D.R."/>
            <person name="Rogers J."/>
            <person name="Ross M.T."/>
        </authorList>
    </citation>
    <scope>NUCLEOTIDE SEQUENCE [LARGE SCALE GENOMIC DNA]</scope>
</reference>
<reference key="2">
    <citation type="journal article" date="2004" name="Genome Res.">
        <title>The status, quality, and expansion of the NIH full-length cDNA project: the Mammalian Gene Collection (MGC).</title>
        <authorList>
            <consortium name="The MGC Project Team"/>
        </authorList>
    </citation>
    <scope>NUCLEOTIDE SEQUENCE [LARGE SCALE MRNA]</scope>
</reference>
<protein>
    <recommendedName>
        <fullName evidence="5">Protein ZAR1-like</fullName>
    </recommendedName>
    <alternativeName>
        <fullName evidence="5">Zygote arrest protein 1-like</fullName>
    </alternativeName>
</protein>
<evidence type="ECO:0000250" key="1">
    <source>
        <dbReference type="UniProtKB" id="C3VD30"/>
    </source>
</evidence>
<evidence type="ECO:0000250" key="2">
    <source>
        <dbReference type="UniProtKB" id="Q80SU3"/>
    </source>
</evidence>
<evidence type="ECO:0000255" key="3"/>
<evidence type="ECO:0000256" key="4">
    <source>
        <dbReference type="SAM" id="MobiDB-lite"/>
    </source>
</evidence>
<evidence type="ECO:0000305" key="5"/>
<evidence type="ECO:0000312" key="6">
    <source>
        <dbReference type="HGNC" id="HGNC:37116"/>
    </source>
</evidence>
<dbReference type="EMBL" id="AL445212">
    <property type="status" value="NOT_ANNOTATED_CDS"/>
    <property type="molecule type" value="Genomic_DNA"/>
</dbReference>
<dbReference type="EMBL" id="BC146956">
    <property type="protein sequence ID" value="AAI46957.1"/>
    <property type="molecule type" value="mRNA"/>
</dbReference>
<dbReference type="EMBL" id="BC146965">
    <property type="protein sequence ID" value="AAI46966.1"/>
    <property type="molecule type" value="mRNA"/>
</dbReference>
<dbReference type="CCDS" id="CCDS45023.1"/>
<dbReference type="RefSeq" id="NP_001130043.1">
    <property type="nucleotide sequence ID" value="NM_001136571.2"/>
</dbReference>
<dbReference type="BioGRID" id="571620">
    <property type="interactions" value="23"/>
</dbReference>
<dbReference type="FunCoup" id="A6NP61">
    <property type="interactions" value="98"/>
</dbReference>
<dbReference type="IntAct" id="A6NP61">
    <property type="interactions" value="16"/>
</dbReference>
<dbReference type="STRING" id="9606.ENSP00000437289"/>
<dbReference type="GlyGen" id="A6NP61">
    <property type="glycosylation" value="1 site, 1 O-linked glycan (1 site)"/>
</dbReference>
<dbReference type="iPTMnet" id="A6NP61"/>
<dbReference type="PhosphoSitePlus" id="A6NP61"/>
<dbReference type="BioMuta" id="ZAR1L"/>
<dbReference type="MassIVE" id="A6NP61"/>
<dbReference type="PaxDb" id="9606-ENSP00000437289"/>
<dbReference type="PeptideAtlas" id="A6NP61"/>
<dbReference type="ProteomicsDB" id="1661"/>
<dbReference type="Antibodypedia" id="49134">
    <property type="antibodies" value="38 antibodies from 9 providers"/>
</dbReference>
<dbReference type="DNASU" id="646799"/>
<dbReference type="Ensembl" id="ENST00000345108.6">
    <property type="protein sequence ID" value="ENSP00000344616.5"/>
    <property type="gene ID" value="ENSG00000189167.12"/>
</dbReference>
<dbReference type="Ensembl" id="ENST00000533490.7">
    <property type="protein sequence ID" value="ENSP00000437289.2"/>
    <property type="gene ID" value="ENSG00000189167.12"/>
</dbReference>
<dbReference type="GeneID" id="646799"/>
<dbReference type="KEGG" id="hsa:646799"/>
<dbReference type="MANE-Select" id="ENST00000533490.7">
    <property type="protein sequence ID" value="ENSP00000437289.2"/>
    <property type="RefSeq nucleotide sequence ID" value="NM_001136571.2"/>
    <property type="RefSeq protein sequence ID" value="NP_001130043.1"/>
</dbReference>
<dbReference type="UCSC" id="uc010abc.1">
    <property type="organism name" value="human"/>
</dbReference>
<dbReference type="AGR" id="HGNC:37116"/>
<dbReference type="CTD" id="646799"/>
<dbReference type="DisGeNET" id="646799"/>
<dbReference type="GeneCards" id="ZAR1L"/>
<dbReference type="HGNC" id="HGNC:37116">
    <property type="gene designation" value="ZAR1L"/>
</dbReference>
<dbReference type="HPA" id="ENSG00000189167">
    <property type="expression patterns" value="Not detected"/>
</dbReference>
<dbReference type="MIM" id="620424">
    <property type="type" value="gene"/>
</dbReference>
<dbReference type="neXtProt" id="NX_A6NP61"/>
<dbReference type="OpenTargets" id="ENSG00000189167"/>
<dbReference type="PharmGKB" id="PA165505636"/>
<dbReference type="VEuPathDB" id="HostDB:ENSG00000189167"/>
<dbReference type="eggNOG" id="ENOG502QWC9">
    <property type="taxonomic scope" value="Eukaryota"/>
</dbReference>
<dbReference type="GeneTree" id="ENSGT00390000012305"/>
<dbReference type="HOGENOM" id="CLU_053350_1_0_1"/>
<dbReference type="InParanoid" id="A6NP61"/>
<dbReference type="OMA" id="KFSCGNI"/>
<dbReference type="OrthoDB" id="9885288at2759"/>
<dbReference type="PAN-GO" id="A6NP61">
    <property type="GO annotations" value="2 GO annotations based on evolutionary models"/>
</dbReference>
<dbReference type="PhylomeDB" id="A6NP61"/>
<dbReference type="TreeFam" id="TF331383"/>
<dbReference type="PathwayCommons" id="A6NP61"/>
<dbReference type="BioGRID-ORCS" id="646799">
    <property type="hits" value="11 hits in 1136 CRISPR screens"/>
</dbReference>
<dbReference type="ChiTaRS" id="ZAR1L">
    <property type="organism name" value="human"/>
</dbReference>
<dbReference type="GenomeRNAi" id="646799"/>
<dbReference type="Pharos" id="A6NP61">
    <property type="development level" value="Tdark"/>
</dbReference>
<dbReference type="PRO" id="PR:A6NP61"/>
<dbReference type="Proteomes" id="UP000005640">
    <property type="component" value="Chromosome 13"/>
</dbReference>
<dbReference type="RNAct" id="A6NP61">
    <property type="molecule type" value="protein"/>
</dbReference>
<dbReference type="Bgee" id="ENSG00000189167">
    <property type="expression patterns" value="Expressed in primordial germ cell in gonad and 13 other cell types or tissues"/>
</dbReference>
<dbReference type="GO" id="GO:0005737">
    <property type="term" value="C:cytoplasm"/>
    <property type="evidence" value="ECO:0000318"/>
    <property type="project" value="GO_Central"/>
</dbReference>
<dbReference type="GO" id="GO:0036464">
    <property type="term" value="C:cytoplasmic ribonucleoprotein granule"/>
    <property type="evidence" value="ECO:0007669"/>
    <property type="project" value="UniProtKB-SubCell"/>
</dbReference>
<dbReference type="GO" id="GO:0043232">
    <property type="term" value="C:intracellular membraneless organelle"/>
    <property type="evidence" value="ECO:0000250"/>
    <property type="project" value="UniProtKB"/>
</dbReference>
<dbReference type="GO" id="GO:0003730">
    <property type="term" value="F:mRNA 3'-UTR binding"/>
    <property type="evidence" value="ECO:0000250"/>
    <property type="project" value="UniProtKB"/>
</dbReference>
<dbReference type="GO" id="GO:0008270">
    <property type="term" value="F:zinc ion binding"/>
    <property type="evidence" value="ECO:0007669"/>
    <property type="project" value="UniProtKB-KW"/>
</dbReference>
<dbReference type="GO" id="GO:0017148">
    <property type="term" value="P:negative regulation of translation"/>
    <property type="evidence" value="ECO:0000250"/>
    <property type="project" value="UniProtKB"/>
</dbReference>
<dbReference type="GO" id="GO:0001556">
    <property type="term" value="P:oocyte maturation"/>
    <property type="evidence" value="ECO:0000250"/>
    <property type="project" value="UniProtKB"/>
</dbReference>
<dbReference type="GO" id="GO:0006412">
    <property type="term" value="P:translation"/>
    <property type="evidence" value="ECO:0000318"/>
    <property type="project" value="GO_Central"/>
</dbReference>
<dbReference type="InterPro" id="IPR026775">
    <property type="entry name" value="Zar1"/>
</dbReference>
<dbReference type="InterPro" id="IPR027377">
    <property type="entry name" value="ZAR1/RTP1-5-like_Znf-3CxxC"/>
</dbReference>
<dbReference type="PANTHER" id="PTHR31054:SF5">
    <property type="entry name" value="PROTEIN ZAR1-LIKE"/>
    <property type="match status" value="1"/>
</dbReference>
<dbReference type="PANTHER" id="PTHR31054">
    <property type="entry name" value="ZYGOTE ARREST PROTEIN 1-LIKE ISOFORM X1"/>
    <property type="match status" value="1"/>
</dbReference>
<dbReference type="Pfam" id="PF13695">
    <property type="entry name" value="Zn_ribbon_3CxxC"/>
    <property type="match status" value="1"/>
</dbReference>
<dbReference type="SMART" id="SM01328">
    <property type="entry name" value="zf-3CxxC"/>
    <property type="match status" value="1"/>
</dbReference>
<sequence>MERFVRVPYGLYQGYGSTVPLGQPGLSGHKQPDWRQNMGPPTFLARPGLLVPANAPDYCIDPYKRAQLKAILSQMNPSLSPRLCKPNTKEVGVQVSPRVDKAVQCSLGPRTLSSCSPWDGRDPQEPLPACGVTSPATGRRGLIRLRRDGDEAESKALPGPAEASQPQPPSRRSGADRQEEPGQLEESGEKDAPCPQETKSKQVPGDAASEPLRRPNFQFLEPKYGYFHCKDCKTRWESAYVWCISGTNKVYFKQLCCKCQKSFNPYRVEAIQCQTCSKSHCSCPQKKRHIDLRRPHRQELCGRCKDKRFSCGNIYSFKYVM</sequence>
<proteinExistence type="evidence at protein level"/>
<comment type="function">
    <text evidence="1 2">mRNA-binding protein required for maternal mRNA storage, translation and degradation during oocyte maturation (By similarity). Probably promotes formation of some phase-separated membraneless compartment that stores maternal mRNAs in oocytes: acts by undergoing liquid-liquid phase separation upon binding to maternal mRNAs (By similarity). Binds to the 3'-UTR of maternal mRNAs, inhibiting their translation (By similarity).</text>
</comment>
<comment type="subunit">
    <text evidence="1">Interacts with YBX2.</text>
</comment>
<comment type="subcellular location">
    <subcellularLocation>
        <location evidence="1">Cytoplasm</location>
        <location evidence="1">Cytoplasmic ribonucleoprotein granule</location>
    </subcellularLocation>
</comment>
<comment type="domain">
    <text evidence="2">Disordered region at the N-terminus undergoes liquid-liquid phase separation (LLPS) for the formation of membraneless compartments that store maternal mRNAs in oocytes.</text>
</comment>
<comment type="domain">
    <text evidence="1">The 3CxxC-type mediates binding to the 3'-UTR of mRNAs.</text>
</comment>
<comment type="similarity">
    <text evidence="5">Belongs to the ZAR1 family.</text>
</comment>
<accession>A6NP61</accession>
<accession>B2RV03</accession>
<accession>B7ZBU2</accession>
<gene>
    <name evidence="6" type="primary">ZAR1L</name>
</gene>
<organism>
    <name type="scientific">Homo sapiens</name>
    <name type="common">Human</name>
    <dbReference type="NCBI Taxonomy" id="9606"/>
    <lineage>
        <taxon>Eukaryota</taxon>
        <taxon>Metazoa</taxon>
        <taxon>Chordata</taxon>
        <taxon>Craniata</taxon>
        <taxon>Vertebrata</taxon>
        <taxon>Euteleostomi</taxon>
        <taxon>Mammalia</taxon>
        <taxon>Eutheria</taxon>
        <taxon>Euarchontoglires</taxon>
        <taxon>Primates</taxon>
        <taxon>Haplorrhini</taxon>
        <taxon>Catarrhini</taxon>
        <taxon>Hominidae</taxon>
        <taxon>Homo</taxon>
    </lineage>
</organism>